<gene>
    <name evidence="1" type="primary">ulaD</name>
    <name type="ordered locus">ECDH10B_4391</name>
</gene>
<evidence type="ECO:0000255" key="1">
    <source>
        <dbReference type="HAMAP-Rule" id="MF_01267"/>
    </source>
</evidence>
<organism>
    <name type="scientific">Escherichia coli (strain K12 / DH10B)</name>
    <dbReference type="NCBI Taxonomy" id="316385"/>
    <lineage>
        <taxon>Bacteria</taxon>
        <taxon>Pseudomonadati</taxon>
        <taxon>Pseudomonadota</taxon>
        <taxon>Gammaproteobacteria</taxon>
        <taxon>Enterobacterales</taxon>
        <taxon>Enterobacteriaceae</taxon>
        <taxon>Escherichia</taxon>
    </lineage>
</organism>
<feature type="chain" id="PRO_1000140113" description="3-keto-L-gulonate-6-phosphate decarboxylase UlaD">
    <location>
        <begin position="1"/>
        <end position="216"/>
    </location>
</feature>
<feature type="binding site" evidence="1">
    <location>
        <position position="11"/>
    </location>
    <ligand>
        <name>substrate</name>
    </ligand>
</feature>
<feature type="binding site" evidence="1">
    <location>
        <position position="33"/>
    </location>
    <ligand>
        <name>Mg(2+)</name>
        <dbReference type="ChEBI" id="CHEBI:18420"/>
    </ligand>
</feature>
<feature type="binding site" evidence="1">
    <location>
        <position position="62"/>
    </location>
    <ligand>
        <name>Mg(2+)</name>
        <dbReference type="ChEBI" id="CHEBI:18420"/>
    </ligand>
</feature>
<feature type="binding site" evidence="1">
    <location>
        <position position="192"/>
    </location>
    <ligand>
        <name>substrate</name>
    </ligand>
</feature>
<feature type="site" description="Transition state stabilizer" evidence="1">
    <location>
        <position position="64"/>
    </location>
</feature>
<feature type="site" description="Transition state stabilizer" evidence="1">
    <location>
        <position position="67"/>
    </location>
</feature>
<protein>
    <recommendedName>
        <fullName evidence="1">3-keto-L-gulonate-6-phosphate decarboxylase UlaD</fullName>
        <ecNumber evidence="1">4.1.1.85</ecNumber>
    </recommendedName>
    <alternativeName>
        <fullName evidence="1">3-dehydro-L-gulonate-6-phosphate decarboxylase</fullName>
    </alternativeName>
    <alternativeName>
        <fullName evidence="1">KGPDC</fullName>
    </alternativeName>
    <alternativeName>
        <fullName evidence="1">L-ascorbate utilization protein D</fullName>
    </alternativeName>
</protein>
<comment type="function">
    <text evidence="1">Catalyzes the decarboxylation of 3-keto-L-gulonate-6-P into L-xylulose-5-P. Is involved in the anaerobic L-ascorbate utilization.</text>
</comment>
<comment type="catalytic activity">
    <reaction evidence="1">
        <text>3-dehydro-L-gulonate 6-phosphate + H(+) = L-xylulose 5-phosphate + CO2</text>
        <dbReference type="Rhea" id="RHEA:14353"/>
        <dbReference type="ChEBI" id="CHEBI:15378"/>
        <dbReference type="ChEBI" id="CHEBI:16526"/>
        <dbReference type="ChEBI" id="CHEBI:57829"/>
        <dbReference type="ChEBI" id="CHEBI:58774"/>
        <dbReference type="EC" id="4.1.1.85"/>
    </reaction>
</comment>
<comment type="cofactor">
    <cofactor evidence="1">
        <name>Mg(2+)</name>
        <dbReference type="ChEBI" id="CHEBI:18420"/>
    </cofactor>
    <text evidence="1">Binds 1 Mg(2+) ion per subunit.</text>
</comment>
<comment type="pathway">
    <text evidence="1">Cofactor degradation; L-ascorbate degradation; D-xylulose 5-phosphate from L-ascorbate: step 2/4.</text>
</comment>
<comment type="subunit">
    <text evidence="1">Homodimer.</text>
</comment>
<comment type="induction">
    <text evidence="1">Induced by L-ascorbate. Repressed by UlaR.</text>
</comment>
<comment type="similarity">
    <text evidence="1">Belongs to the HPS/KGPDC family. KGPDC subfamily.</text>
</comment>
<sequence length="216" mass="23578">MSLPMLQVALDNQTMDSAYETTRLIAEEVDIIEVGTILCVGEGVRAVRDLKALYPHKIVLADAKIADAGKILSRMCFEANADWVTVICCADINTAKGALDVAKEFNGDVQIELTGYWTWEQAQQWRDAGIGQVVYHRSRDAQAAGVAWGEADITAIKRLSDMGFKVTVTGGLALEDLPLFKGIPIHVFIAGRSIRDAASPVEAARQFKRSIAELWG</sequence>
<reference key="1">
    <citation type="journal article" date="2008" name="J. Bacteriol.">
        <title>The complete genome sequence of Escherichia coli DH10B: insights into the biology of a laboratory workhorse.</title>
        <authorList>
            <person name="Durfee T."/>
            <person name="Nelson R."/>
            <person name="Baldwin S."/>
            <person name="Plunkett G. III"/>
            <person name="Burland V."/>
            <person name="Mau B."/>
            <person name="Petrosino J.F."/>
            <person name="Qin X."/>
            <person name="Muzny D.M."/>
            <person name="Ayele M."/>
            <person name="Gibbs R.A."/>
            <person name="Csorgo B."/>
            <person name="Posfai G."/>
            <person name="Weinstock G.M."/>
            <person name="Blattner F.R."/>
        </authorList>
    </citation>
    <scope>NUCLEOTIDE SEQUENCE [LARGE SCALE GENOMIC DNA]</scope>
    <source>
        <strain>K12 / DH10B</strain>
    </source>
</reference>
<keyword id="KW-0119">Carbohydrate metabolism</keyword>
<keyword id="KW-0210">Decarboxylase</keyword>
<keyword id="KW-0456">Lyase</keyword>
<keyword id="KW-0460">Magnesium</keyword>
<keyword id="KW-0479">Metal-binding</keyword>
<accession>B1XDU7</accession>
<name>ULAD_ECODH</name>
<dbReference type="EC" id="4.1.1.85" evidence="1"/>
<dbReference type="EMBL" id="CP000948">
    <property type="protein sequence ID" value="ACB05184.1"/>
    <property type="molecule type" value="Genomic_DNA"/>
</dbReference>
<dbReference type="RefSeq" id="WP_000056749.1">
    <property type="nucleotide sequence ID" value="NC_010473.1"/>
</dbReference>
<dbReference type="SMR" id="B1XDU7"/>
<dbReference type="KEGG" id="ecd:ECDH10B_4391"/>
<dbReference type="HOGENOM" id="CLU_081825_0_0_6"/>
<dbReference type="UniPathway" id="UPA00263">
    <property type="reaction ID" value="UER00378"/>
</dbReference>
<dbReference type="GO" id="GO:0033982">
    <property type="term" value="F:3-dehydro-L-gulonate-6-phosphate decarboxylase activity"/>
    <property type="evidence" value="ECO:0007669"/>
    <property type="project" value="UniProtKB-EC"/>
</dbReference>
<dbReference type="GO" id="GO:0000287">
    <property type="term" value="F:magnesium ion binding"/>
    <property type="evidence" value="ECO:0007669"/>
    <property type="project" value="UniProtKB-UniRule"/>
</dbReference>
<dbReference type="GO" id="GO:0004590">
    <property type="term" value="F:orotidine-5'-phosphate decarboxylase activity"/>
    <property type="evidence" value="ECO:0007669"/>
    <property type="project" value="InterPro"/>
</dbReference>
<dbReference type="GO" id="GO:0006207">
    <property type="term" value="P:'de novo' pyrimidine nucleobase biosynthetic process"/>
    <property type="evidence" value="ECO:0007669"/>
    <property type="project" value="InterPro"/>
</dbReference>
<dbReference type="GO" id="GO:0019854">
    <property type="term" value="P:L-ascorbic acid catabolic process"/>
    <property type="evidence" value="ECO:0007669"/>
    <property type="project" value="UniProtKB-UniRule"/>
</dbReference>
<dbReference type="CDD" id="cd04726">
    <property type="entry name" value="KGPDC_HPS"/>
    <property type="match status" value="1"/>
</dbReference>
<dbReference type="FunFam" id="3.20.20.70:FF:000022">
    <property type="entry name" value="3-keto-L-gulonate-6-phosphate decarboxylase UlaD"/>
    <property type="match status" value="1"/>
</dbReference>
<dbReference type="Gene3D" id="3.20.20.70">
    <property type="entry name" value="Aldolase class I"/>
    <property type="match status" value="1"/>
</dbReference>
<dbReference type="HAMAP" id="MF_01267">
    <property type="entry name" value="UlaD"/>
    <property type="match status" value="1"/>
</dbReference>
<dbReference type="InterPro" id="IPR023942">
    <property type="entry name" value="3-keto-L-gulonate6Pdecase_UlaD"/>
</dbReference>
<dbReference type="InterPro" id="IPR013785">
    <property type="entry name" value="Aldolase_TIM"/>
</dbReference>
<dbReference type="InterPro" id="IPR041710">
    <property type="entry name" value="HPS/KGPDC"/>
</dbReference>
<dbReference type="InterPro" id="IPR001754">
    <property type="entry name" value="OMPdeCOase_dom"/>
</dbReference>
<dbReference type="InterPro" id="IPR011060">
    <property type="entry name" value="RibuloseP-bd_barrel"/>
</dbReference>
<dbReference type="NCBIfam" id="NF009832">
    <property type="entry name" value="PRK13306.1"/>
    <property type="match status" value="1"/>
</dbReference>
<dbReference type="PANTHER" id="PTHR35039">
    <property type="entry name" value="3-KETO-L-GULONATE-6-PHOSPHATE DECARBOXYLASE SGBH-RELATED"/>
    <property type="match status" value="1"/>
</dbReference>
<dbReference type="PANTHER" id="PTHR35039:SF3">
    <property type="entry name" value="3-KETO-L-GULONATE-6-PHOSPHATE DECARBOXYLASE SGBH-RELATED"/>
    <property type="match status" value="1"/>
</dbReference>
<dbReference type="Pfam" id="PF00215">
    <property type="entry name" value="OMPdecase"/>
    <property type="match status" value="1"/>
</dbReference>
<dbReference type="SMART" id="SM00934">
    <property type="entry name" value="OMPdecase"/>
    <property type="match status" value="1"/>
</dbReference>
<dbReference type="SUPFAM" id="SSF51366">
    <property type="entry name" value="Ribulose-phoshate binding barrel"/>
    <property type="match status" value="1"/>
</dbReference>
<proteinExistence type="inferred from homology"/>